<name>SYS_CROS8</name>
<keyword id="KW-0030">Aminoacyl-tRNA synthetase</keyword>
<keyword id="KW-0067">ATP-binding</keyword>
<keyword id="KW-0963">Cytoplasm</keyword>
<keyword id="KW-0436">Ligase</keyword>
<keyword id="KW-0547">Nucleotide-binding</keyword>
<keyword id="KW-0648">Protein biosynthesis</keyword>
<keyword id="KW-1185">Reference proteome</keyword>
<organism>
    <name type="scientific">Cronobacter sakazakii (strain ATCC BAA-894)</name>
    <name type="common">Enterobacter sakazakii</name>
    <dbReference type="NCBI Taxonomy" id="290339"/>
    <lineage>
        <taxon>Bacteria</taxon>
        <taxon>Pseudomonadati</taxon>
        <taxon>Pseudomonadota</taxon>
        <taxon>Gammaproteobacteria</taxon>
        <taxon>Enterobacterales</taxon>
        <taxon>Enterobacteriaceae</taxon>
        <taxon>Cronobacter</taxon>
    </lineage>
</organism>
<comment type="function">
    <text evidence="1">Catalyzes the attachment of serine to tRNA(Ser). Is also able to aminoacylate tRNA(Sec) with serine, to form the misacylated tRNA L-seryl-tRNA(Sec), which will be further converted into selenocysteinyl-tRNA(Sec).</text>
</comment>
<comment type="catalytic activity">
    <reaction evidence="1">
        <text>tRNA(Ser) + L-serine + ATP = L-seryl-tRNA(Ser) + AMP + diphosphate + H(+)</text>
        <dbReference type="Rhea" id="RHEA:12292"/>
        <dbReference type="Rhea" id="RHEA-COMP:9669"/>
        <dbReference type="Rhea" id="RHEA-COMP:9703"/>
        <dbReference type="ChEBI" id="CHEBI:15378"/>
        <dbReference type="ChEBI" id="CHEBI:30616"/>
        <dbReference type="ChEBI" id="CHEBI:33019"/>
        <dbReference type="ChEBI" id="CHEBI:33384"/>
        <dbReference type="ChEBI" id="CHEBI:78442"/>
        <dbReference type="ChEBI" id="CHEBI:78533"/>
        <dbReference type="ChEBI" id="CHEBI:456215"/>
        <dbReference type="EC" id="6.1.1.11"/>
    </reaction>
</comment>
<comment type="catalytic activity">
    <reaction evidence="1">
        <text>tRNA(Sec) + L-serine + ATP = L-seryl-tRNA(Sec) + AMP + diphosphate + H(+)</text>
        <dbReference type="Rhea" id="RHEA:42580"/>
        <dbReference type="Rhea" id="RHEA-COMP:9742"/>
        <dbReference type="Rhea" id="RHEA-COMP:10128"/>
        <dbReference type="ChEBI" id="CHEBI:15378"/>
        <dbReference type="ChEBI" id="CHEBI:30616"/>
        <dbReference type="ChEBI" id="CHEBI:33019"/>
        <dbReference type="ChEBI" id="CHEBI:33384"/>
        <dbReference type="ChEBI" id="CHEBI:78442"/>
        <dbReference type="ChEBI" id="CHEBI:78533"/>
        <dbReference type="ChEBI" id="CHEBI:456215"/>
        <dbReference type="EC" id="6.1.1.11"/>
    </reaction>
</comment>
<comment type="pathway">
    <text evidence="1">Aminoacyl-tRNA biosynthesis; selenocysteinyl-tRNA(Sec) biosynthesis; L-seryl-tRNA(Sec) from L-serine and tRNA(Sec): step 1/1.</text>
</comment>
<comment type="subunit">
    <text evidence="1">Homodimer. The tRNA molecule binds across the dimer.</text>
</comment>
<comment type="subcellular location">
    <subcellularLocation>
        <location evidence="1">Cytoplasm</location>
    </subcellularLocation>
</comment>
<comment type="domain">
    <text evidence="1">Consists of two distinct domains, a catalytic core and a N-terminal extension that is involved in tRNA binding.</text>
</comment>
<comment type="similarity">
    <text evidence="1">Belongs to the class-II aminoacyl-tRNA synthetase family. Type-1 seryl-tRNA synthetase subfamily.</text>
</comment>
<feature type="chain" id="PRO_1000019679" description="Serine--tRNA ligase">
    <location>
        <begin position="1"/>
        <end position="430"/>
    </location>
</feature>
<feature type="binding site" evidence="1">
    <location>
        <begin position="237"/>
        <end position="239"/>
    </location>
    <ligand>
        <name>L-serine</name>
        <dbReference type="ChEBI" id="CHEBI:33384"/>
    </ligand>
</feature>
<feature type="binding site" evidence="1">
    <location>
        <begin position="268"/>
        <end position="270"/>
    </location>
    <ligand>
        <name>ATP</name>
        <dbReference type="ChEBI" id="CHEBI:30616"/>
    </ligand>
</feature>
<feature type="binding site" evidence="1">
    <location>
        <position position="291"/>
    </location>
    <ligand>
        <name>L-serine</name>
        <dbReference type="ChEBI" id="CHEBI:33384"/>
    </ligand>
</feature>
<feature type="binding site" evidence="1">
    <location>
        <begin position="355"/>
        <end position="358"/>
    </location>
    <ligand>
        <name>ATP</name>
        <dbReference type="ChEBI" id="CHEBI:30616"/>
    </ligand>
</feature>
<feature type="binding site" evidence="1">
    <location>
        <position position="391"/>
    </location>
    <ligand>
        <name>L-serine</name>
        <dbReference type="ChEBI" id="CHEBI:33384"/>
    </ligand>
</feature>
<accession>A7MER7</accession>
<reference key="1">
    <citation type="journal article" date="2010" name="PLoS ONE">
        <title>Genome sequence of Cronobacter sakazakii BAA-894 and comparative genomic hybridization analysis with other Cronobacter species.</title>
        <authorList>
            <person name="Kucerova E."/>
            <person name="Clifton S.W."/>
            <person name="Xia X.Q."/>
            <person name="Long F."/>
            <person name="Porwollik S."/>
            <person name="Fulton L."/>
            <person name="Fronick C."/>
            <person name="Minx P."/>
            <person name="Kyung K."/>
            <person name="Warren W."/>
            <person name="Fulton R."/>
            <person name="Feng D."/>
            <person name="Wollam A."/>
            <person name="Shah N."/>
            <person name="Bhonagiri V."/>
            <person name="Nash W.E."/>
            <person name="Hallsworth-Pepin K."/>
            <person name="Wilson R.K."/>
            <person name="McClelland M."/>
            <person name="Forsythe S.J."/>
        </authorList>
    </citation>
    <scope>NUCLEOTIDE SEQUENCE [LARGE SCALE GENOMIC DNA]</scope>
    <source>
        <strain>ATCC BAA-894</strain>
    </source>
</reference>
<evidence type="ECO:0000255" key="1">
    <source>
        <dbReference type="HAMAP-Rule" id="MF_00176"/>
    </source>
</evidence>
<gene>
    <name evidence="1" type="primary">serS</name>
    <name type="ordered locus">ESA_02446</name>
</gene>
<protein>
    <recommendedName>
        <fullName evidence="1">Serine--tRNA ligase</fullName>
        <ecNumber evidence="1">6.1.1.11</ecNumber>
    </recommendedName>
    <alternativeName>
        <fullName evidence="1">Seryl-tRNA synthetase</fullName>
        <shortName evidence="1">SerRS</shortName>
    </alternativeName>
    <alternativeName>
        <fullName evidence="1">Seryl-tRNA(Ser/Sec) synthetase</fullName>
    </alternativeName>
</protein>
<proteinExistence type="inferred from homology"/>
<dbReference type="EC" id="6.1.1.11" evidence="1"/>
<dbReference type="EMBL" id="CP000783">
    <property type="protein sequence ID" value="ABU77692.1"/>
    <property type="molecule type" value="Genomic_DNA"/>
</dbReference>
<dbReference type="RefSeq" id="WP_007866459.1">
    <property type="nucleotide sequence ID" value="NC_009778.1"/>
</dbReference>
<dbReference type="SMR" id="A7MER7"/>
<dbReference type="GeneID" id="56731212"/>
<dbReference type="KEGG" id="esa:ESA_02446"/>
<dbReference type="HOGENOM" id="CLU_023797_1_1_6"/>
<dbReference type="UniPathway" id="UPA00906">
    <property type="reaction ID" value="UER00895"/>
</dbReference>
<dbReference type="Proteomes" id="UP000000260">
    <property type="component" value="Chromosome"/>
</dbReference>
<dbReference type="GO" id="GO:0005737">
    <property type="term" value="C:cytoplasm"/>
    <property type="evidence" value="ECO:0007669"/>
    <property type="project" value="UniProtKB-SubCell"/>
</dbReference>
<dbReference type="GO" id="GO:0005524">
    <property type="term" value="F:ATP binding"/>
    <property type="evidence" value="ECO:0007669"/>
    <property type="project" value="UniProtKB-UniRule"/>
</dbReference>
<dbReference type="GO" id="GO:0004828">
    <property type="term" value="F:serine-tRNA ligase activity"/>
    <property type="evidence" value="ECO:0007669"/>
    <property type="project" value="UniProtKB-UniRule"/>
</dbReference>
<dbReference type="GO" id="GO:0016260">
    <property type="term" value="P:selenocysteine biosynthetic process"/>
    <property type="evidence" value="ECO:0007669"/>
    <property type="project" value="UniProtKB-UniRule"/>
</dbReference>
<dbReference type="GO" id="GO:0006434">
    <property type="term" value="P:seryl-tRNA aminoacylation"/>
    <property type="evidence" value="ECO:0007669"/>
    <property type="project" value="UniProtKB-UniRule"/>
</dbReference>
<dbReference type="CDD" id="cd00770">
    <property type="entry name" value="SerRS_core"/>
    <property type="match status" value="1"/>
</dbReference>
<dbReference type="FunFam" id="1.10.287.40:FF:000001">
    <property type="entry name" value="Serine--tRNA ligase"/>
    <property type="match status" value="1"/>
</dbReference>
<dbReference type="FunFam" id="3.30.930.10:FF:000018">
    <property type="entry name" value="Serine--tRNA ligase"/>
    <property type="match status" value="1"/>
</dbReference>
<dbReference type="Gene3D" id="3.30.930.10">
    <property type="entry name" value="Bira Bifunctional Protein, Domain 2"/>
    <property type="match status" value="1"/>
</dbReference>
<dbReference type="Gene3D" id="1.10.287.40">
    <property type="entry name" value="Serine-tRNA synthetase, tRNA binding domain"/>
    <property type="match status" value="1"/>
</dbReference>
<dbReference type="HAMAP" id="MF_00176">
    <property type="entry name" value="Ser_tRNA_synth_type1"/>
    <property type="match status" value="1"/>
</dbReference>
<dbReference type="InterPro" id="IPR002314">
    <property type="entry name" value="aa-tRNA-synt_IIb"/>
</dbReference>
<dbReference type="InterPro" id="IPR006195">
    <property type="entry name" value="aa-tRNA-synth_II"/>
</dbReference>
<dbReference type="InterPro" id="IPR045864">
    <property type="entry name" value="aa-tRNA-synth_II/BPL/LPL"/>
</dbReference>
<dbReference type="InterPro" id="IPR002317">
    <property type="entry name" value="Ser-tRNA-ligase_type_1"/>
</dbReference>
<dbReference type="InterPro" id="IPR015866">
    <property type="entry name" value="Ser-tRNA-synth_1_N"/>
</dbReference>
<dbReference type="InterPro" id="IPR042103">
    <property type="entry name" value="SerRS_1_N_sf"/>
</dbReference>
<dbReference type="InterPro" id="IPR033729">
    <property type="entry name" value="SerRS_core"/>
</dbReference>
<dbReference type="InterPro" id="IPR010978">
    <property type="entry name" value="tRNA-bd_arm"/>
</dbReference>
<dbReference type="NCBIfam" id="TIGR00414">
    <property type="entry name" value="serS"/>
    <property type="match status" value="1"/>
</dbReference>
<dbReference type="PANTHER" id="PTHR43697:SF1">
    <property type="entry name" value="SERINE--TRNA LIGASE"/>
    <property type="match status" value="1"/>
</dbReference>
<dbReference type="PANTHER" id="PTHR43697">
    <property type="entry name" value="SERYL-TRNA SYNTHETASE"/>
    <property type="match status" value="1"/>
</dbReference>
<dbReference type="Pfam" id="PF02403">
    <property type="entry name" value="Seryl_tRNA_N"/>
    <property type="match status" value="1"/>
</dbReference>
<dbReference type="Pfam" id="PF00587">
    <property type="entry name" value="tRNA-synt_2b"/>
    <property type="match status" value="1"/>
</dbReference>
<dbReference type="PIRSF" id="PIRSF001529">
    <property type="entry name" value="Ser-tRNA-synth_IIa"/>
    <property type="match status" value="1"/>
</dbReference>
<dbReference type="PRINTS" id="PR00981">
    <property type="entry name" value="TRNASYNTHSER"/>
</dbReference>
<dbReference type="SUPFAM" id="SSF55681">
    <property type="entry name" value="Class II aaRS and biotin synthetases"/>
    <property type="match status" value="1"/>
</dbReference>
<dbReference type="SUPFAM" id="SSF46589">
    <property type="entry name" value="tRNA-binding arm"/>
    <property type="match status" value="1"/>
</dbReference>
<dbReference type="PROSITE" id="PS50862">
    <property type="entry name" value="AA_TRNA_LIGASE_II"/>
    <property type="match status" value="1"/>
</dbReference>
<sequence>MLDPNLLRTEPDAVAEKLARRGFKLDVDKLVALEERRKVLQVKTENLQAERNSRSKSIGQAKARGEDIEPLRLEVNKLGEELDAAKNELDALLAEIRDIALTLPNLPDDEVPLGKDDSENVEVSRWGTPRKFDFEIRDHVTLGETLGGLDFASAVKLTGSRFVVMKGQIARLHRALSQFMLDLHTEEHGYSENYVPYLVNHDTLYGTGQLPKFAGDLFHTRPLEEEADSSNYALIPTAEVPLTNLVRDEIIDEESLPIKMTAHTPCFRSEAGSYGRDTRGLIRMHQFDKVEMVQVVRPEDSMQALEEMTGHAEKVLQLLGLPYRKVLLCSGDMGFGARKTYDLEVWLPAQDTYREISSCSNMWDFQARRMQARCRSKSDKKTRLVHTLNGSGLAVGRTLVAVLENYQQADGRIEIPEVLRPYMKGLEFIG</sequence>